<evidence type="ECO:0000255" key="1">
    <source>
        <dbReference type="HAMAP-Rule" id="MF_00564"/>
    </source>
</evidence>
<feature type="chain" id="PRO_1000024879" description="Ribonuclease PH">
    <location>
        <begin position="1"/>
        <end position="237"/>
    </location>
</feature>
<feature type="binding site" evidence="1">
    <location>
        <position position="86"/>
    </location>
    <ligand>
        <name>phosphate</name>
        <dbReference type="ChEBI" id="CHEBI:43474"/>
        <note>substrate</note>
    </ligand>
</feature>
<feature type="binding site" evidence="1">
    <location>
        <begin position="124"/>
        <end position="126"/>
    </location>
    <ligand>
        <name>phosphate</name>
        <dbReference type="ChEBI" id="CHEBI:43474"/>
        <note>substrate</note>
    </ligand>
</feature>
<comment type="function">
    <text evidence="1">Phosphorolytic 3'-5' exoribonuclease that plays an important role in tRNA 3'-end maturation. Removes nucleotide residues following the 3'-CCA terminus of tRNAs; can also add nucleotides to the ends of RNA molecules by using nucleoside diphosphates as substrates, but this may not be physiologically important. Probably plays a role in initiation of 16S rRNA degradation (leading to ribosome degradation) during starvation.</text>
</comment>
<comment type="catalytic activity">
    <reaction evidence="1">
        <text>tRNA(n+1) + phosphate = tRNA(n) + a ribonucleoside 5'-diphosphate</text>
        <dbReference type="Rhea" id="RHEA:10628"/>
        <dbReference type="Rhea" id="RHEA-COMP:17343"/>
        <dbReference type="Rhea" id="RHEA-COMP:17344"/>
        <dbReference type="ChEBI" id="CHEBI:43474"/>
        <dbReference type="ChEBI" id="CHEBI:57930"/>
        <dbReference type="ChEBI" id="CHEBI:173114"/>
        <dbReference type="EC" id="2.7.7.56"/>
    </reaction>
</comment>
<comment type="subunit">
    <text evidence="1">Homohexameric ring arranged as a trimer of dimers.</text>
</comment>
<comment type="similarity">
    <text evidence="1">Belongs to the RNase PH family.</text>
</comment>
<protein>
    <recommendedName>
        <fullName evidence="1">Ribonuclease PH</fullName>
        <shortName evidence="1">RNase PH</shortName>
        <ecNumber evidence="1">2.7.7.56</ecNumber>
    </recommendedName>
    <alternativeName>
        <fullName evidence="1">tRNA nucleotidyltransferase</fullName>
    </alternativeName>
</protein>
<gene>
    <name evidence="1" type="primary">rph</name>
    <name type="ordered locus">Sbal_0370</name>
</gene>
<accession>A3CZI9</accession>
<organism>
    <name type="scientific">Shewanella baltica (strain OS155 / ATCC BAA-1091)</name>
    <dbReference type="NCBI Taxonomy" id="325240"/>
    <lineage>
        <taxon>Bacteria</taxon>
        <taxon>Pseudomonadati</taxon>
        <taxon>Pseudomonadota</taxon>
        <taxon>Gammaproteobacteria</taxon>
        <taxon>Alteromonadales</taxon>
        <taxon>Shewanellaceae</taxon>
        <taxon>Shewanella</taxon>
    </lineage>
</organism>
<keyword id="KW-0548">Nucleotidyltransferase</keyword>
<keyword id="KW-1185">Reference proteome</keyword>
<keyword id="KW-0694">RNA-binding</keyword>
<keyword id="KW-0698">rRNA processing</keyword>
<keyword id="KW-0808">Transferase</keyword>
<keyword id="KW-0819">tRNA processing</keyword>
<keyword id="KW-0820">tRNA-binding</keyword>
<name>RNPH_SHEB5</name>
<dbReference type="EC" id="2.7.7.56" evidence="1"/>
<dbReference type="EMBL" id="CP000563">
    <property type="protein sequence ID" value="ABN59902.1"/>
    <property type="molecule type" value="Genomic_DNA"/>
</dbReference>
<dbReference type="RefSeq" id="WP_006079862.1">
    <property type="nucleotide sequence ID" value="NC_009052.1"/>
</dbReference>
<dbReference type="SMR" id="A3CZI9"/>
<dbReference type="STRING" id="325240.Sbal_0370"/>
<dbReference type="GeneID" id="11770720"/>
<dbReference type="KEGG" id="sbl:Sbal_0370"/>
<dbReference type="HOGENOM" id="CLU_050858_0_0_6"/>
<dbReference type="OrthoDB" id="9802265at2"/>
<dbReference type="Proteomes" id="UP000001557">
    <property type="component" value="Chromosome"/>
</dbReference>
<dbReference type="GO" id="GO:0000175">
    <property type="term" value="F:3'-5'-RNA exonuclease activity"/>
    <property type="evidence" value="ECO:0007669"/>
    <property type="project" value="UniProtKB-UniRule"/>
</dbReference>
<dbReference type="GO" id="GO:0000049">
    <property type="term" value="F:tRNA binding"/>
    <property type="evidence" value="ECO:0007669"/>
    <property type="project" value="UniProtKB-UniRule"/>
</dbReference>
<dbReference type="GO" id="GO:0009022">
    <property type="term" value="F:tRNA nucleotidyltransferase activity"/>
    <property type="evidence" value="ECO:0007669"/>
    <property type="project" value="UniProtKB-UniRule"/>
</dbReference>
<dbReference type="GO" id="GO:0016075">
    <property type="term" value="P:rRNA catabolic process"/>
    <property type="evidence" value="ECO:0007669"/>
    <property type="project" value="UniProtKB-UniRule"/>
</dbReference>
<dbReference type="GO" id="GO:0006364">
    <property type="term" value="P:rRNA processing"/>
    <property type="evidence" value="ECO:0007669"/>
    <property type="project" value="UniProtKB-KW"/>
</dbReference>
<dbReference type="GO" id="GO:0008033">
    <property type="term" value="P:tRNA processing"/>
    <property type="evidence" value="ECO:0007669"/>
    <property type="project" value="UniProtKB-UniRule"/>
</dbReference>
<dbReference type="CDD" id="cd11362">
    <property type="entry name" value="RNase_PH_bact"/>
    <property type="match status" value="1"/>
</dbReference>
<dbReference type="FunFam" id="3.30.230.70:FF:000003">
    <property type="entry name" value="Ribonuclease PH"/>
    <property type="match status" value="1"/>
</dbReference>
<dbReference type="Gene3D" id="3.30.230.70">
    <property type="entry name" value="GHMP Kinase, N-terminal domain"/>
    <property type="match status" value="1"/>
</dbReference>
<dbReference type="HAMAP" id="MF_00564">
    <property type="entry name" value="RNase_PH"/>
    <property type="match status" value="1"/>
</dbReference>
<dbReference type="InterPro" id="IPR001247">
    <property type="entry name" value="ExoRNase_PH_dom1"/>
</dbReference>
<dbReference type="InterPro" id="IPR015847">
    <property type="entry name" value="ExoRNase_PH_dom2"/>
</dbReference>
<dbReference type="InterPro" id="IPR036345">
    <property type="entry name" value="ExoRNase_PH_dom2_sf"/>
</dbReference>
<dbReference type="InterPro" id="IPR027408">
    <property type="entry name" value="PNPase/RNase_PH_dom_sf"/>
</dbReference>
<dbReference type="InterPro" id="IPR020568">
    <property type="entry name" value="Ribosomal_Su5_D2-typ_SF"/>
</dbReference>
<dbReference type="InterPro" id="IPR050080">
    <property type="entry name" value="RNase_PH"/>
</dbReference>
<dbReference type="InterPro" id="IPR002381">
    <property type="entry name" value="RNase_PH_bac-type"/>
</dbReference>
<dbReference type="InterPro" id="IPR018336">
    <property type="entry name" value="RNase_PH_CS"/>
</dbReference>
<dbReference type="NCBIfam" id="TIGR01966">
    <property type="entry name" value="RNasePH"/>
    <property type="match status" value="1"/>
</dbReference>
<dbReference type="PANTHER" id="PTHR11953">
    <property type="entry name" value="EXOSOME COMPLEX COMPONENT"/>
    <property type="match status" value="1"/>
</dbReference>
<dbReference type="PANTHER" id="PTHR11953:SF0">
    <property type="entry name" value="EXOSOME COMPLEX COMPONENT RRP41"/>
    <property type="match status" value="1"/>
</dbReference>
<dbReference type="Pfam" id="PF01138">
    <property type="entry name" value="RNase_PH"/>
    <property type="match status" value="1"/>
</dbReference>
<dbReference type="Pfam" id="PF03725">
    <property type="entry name" value="RNase_PH_C"/>
    <property type="match status" value="1"/>
</dbReference>
<dbReference type="SUPFAM" id="SSF55666">
    <property type="entry name" value="Ribonuclease PH domain 2-like"/>
    <property type="match status" value="1"/>
</dbReference>
<dbReference type="SUPFAM" id="SSF54211">
    <property type="entry name" value="Ribosomal protein S5 domain 2-like"/>
    <property type="match status" value="1"/>
</dbReference>
<dbReference type="PROSITE" id="PS01277">
    <property type="entry name" value="RIBONUCLEASE_PH"/>
    <property type="match status" value="1"/>
</dbReference>
<sequence>MRPSNRTPAQTRPITITRQFTAHAEGSVLVEFGETKVLCTASFTEGVPRFLKGQGQGWVTAEYGMLPRSTHSRMDREAARGKQSGRTQEIQRLIGRALRACVDMKALGENTIVIDCDVIQADGGTRTASITGACVALVDALNWARGKGIIKSNPLKFLIAAVSVGIYKGEAISDLEYIEDSAAETDMNVVMTETGKIIEIQGTAEGEPFSHEELLELLALAKNSIREIVDVQKAALN</sequence>
<reference key="1">
    <citation type="submission" date="2007-02" db="EMBL/GenBank/DDBJ databases">
        <title>Complete sequence of chromosome of Shewanella baltica OS155.</title>
        <authorList>
            <consortium name="US DOE Joint Genome Institute"/>
            <person name="Copeland A."/>
            <person name="Lucas S."/>
            <person name="Lapidus A."/>
            <person name="Barry K."/>
            <person name="Detter J.C."/>
            <person name="Glavina del Rio T."/>
            <person name="Hammon N."/>
            <person name="Israni S."/>
            <person name="Dalin E."/>
            <person name="Tice H."/>
            <person name="Pitluck S."/>
            <person name="Sims D.R."/>
            <person name="Brettin T."/>
            <person name="Bruce D."/>
            <person name="Han C."/>
            <person name="Tapia R."/>
            <person name="Brainard J."/>
            <person name="Schmutz J."/>
            <person name="Larimer F."/>
            <person name="Land M."/>
            <person name="Hauser L."/>
            <person name="Kyrpides N."/>
            <person name="Mikhailova N."/>
            <person name="Brettar I."/>
            <person name="Klappenbach J."/>
            <person name="Konstantinidis K."/>
            <person name="Rodrigues J."/>
            <person name="Tiedje J."/>
            <person name="Richardson P."/>
        </authorList>
    </citation>
    <scope>NUCLEOTIDE SEQUENCE [LARGE SCALE GENOMIC DNA]</scope>
    <source>
        <strain>OS155 / ATCC BAA-1091</strain>
    </source>
</reference>
<proteinExistence type="inferred from homology"/>